<dbReference type="EMBL" id="CP001197">
    <property type="protein sequence ID" value="ACL09995.1"/>
    <property type="molecule type" value="Genomic_DNA"/>
</dbReference>
<dbReference type="SMR" id="B8DJB8"/>
<dbReference type="STRING" id="883.DvMF_3058"/>
<dbReference type="KEGG" id="dvm:DvMF_3058"/>
<dbReference type="eggNOG" id="COG1666">
    <property type="taxonomic scope" value="Bacteria"/>
</dbReference>
<dbReference type="HOGENOM" id="CLU_099839_1_0_7"/>
<dbReference type="OrthoDB" id="9801447at2"/>
<dbReference type="GO" id="GO:0005829">
    <property type="term" value="C:cytosol"/>
    <property type="evidence" value="ECO:0007669"/>
    <property type="project" value="TreeGrafter"/>
</dbReference>
<dbReference type="GO" id="GO:0000166">
    <property type="term" value="F:nucleotide binding"/>
    <property type="evidence" value="ECO:0007669"/>
    <property type="project" value="TreeGrafter"/>
</dbReference>
<dbReference type="CDD" id="cd11740">
    <property type="entry name" value="YajQ_like"/>
    <property type="match status" value="1"/>
</dbReference>
<dbReference type="Gene3D" id="3.30.70.860">
    <property type="match status" value="1"/>
</dbReference>
<dbReference type="Gene3D" id="3.30.70.990">
    <property type="entry name" value="YajQ-like, domain 2"/>
    <property type="match status" value="1"/>
</dbReference>
<dbReference type="HAMAP" id="MF_00632">
    <property type="entry name" value="YajQ"/>
    <property type="match status" value="1"/>
</dbReference>
<dbReference type="InterPro" id="IPR007551">
    <property type="entry name" value="DUF520"/>
</dbReference>
<dbReference type="InterPro" id="IPR035571">
    <property type="entry name" value="UPF0234-like_C"/>
</dbReference>
<dbReference type="InterPro" id="IPR035570">
    <property type="entry name" value="UPF0234_N"/>
</dbReference>
<dbReference type="InterPro" id="IPR036183">
    <property type="entry name" value="YajQ-like_sf"/>
</dbReference>
<dbReference type="NCBIfam" id="NF003819">
    <property type="entry name" value="PRK05412.1"/>
    <property type="match status" value="1"/>
</dbReference>
<dbReference type="PANTHER" id="PTHR30476">
    <property type="entry name" value="UPF0234 PROTEIN YAJQ"/>
    <property type="match status" value="1"/>
</dbReference>
<dbReference type="PANTHER" id="PTHR30476:SF0">
    <property type="entry name" value="UPF0234 PROTEIN YAJQ"/>
    <property type="match status" value="1"/>
</dbReference>
<dbReference type="Pfam" id="PF04461">
    <property type="entry name" value="DUF520"/>
    <property type="match status" value="1"/>
</dbReference>
<dbReference type="SUPFAM" id="SSF89963">
    <property type="entry name" value="YajQ-like"/>
    <property type="match status" value="2"/>
</dbReference>
<sequence>MPSFDVVNKVEMQELDNAVNNVKKEVDTRYDFRNSVTEIELHRGDKRIHLLAGDEMKMRALQDMLQSHCIRRKVDPKCLEFKDIEPTSKGQVKRDVVIQEGITKDVAQKIVKKIKDSKLKVQAAIQDDQVRVTGKKIDDLQEVIQLLRGEEFGVPLQFVNMKA</sequence>
<feature type="chain" id="PRO_1000130616" description="Nucleotide-binding protein DvMF_3058">
    <location>
        <begin position="1"/>
        <end position="163"/>
    </location>
</feature>
<protein>
    <recommendedName>
        <fullName evidence="1">Nucleotide-binding protein DvMF_3058</fullName>
    </recommendedName>
</protein>
<reference key="1">
    <citation type="submission" date="2008-10" db="EMBL/GenBank/DDBJ databases">
        <title>Complete sequence of Desulfovibrio vulgaris str. 'Miyazaki F'.</title>
        <authorList>
            <person name="Lucas S."/>
            <person name="Copeland A."/>
            <person name="Lapidus A."/>
            <person name="Glavina del Rio T."/>
            <person name="Dalin E."/>
            <person name="Tice H."/>
            <person name="Bruce D."/>
            <person name="Goodwin L."/>
            <person name="Pitluck S."/>
            <person name="Sims D."/>
            <person name="Brettin T."/>
            <person name="Detter J.C."/>
            <person name="Han C."/>
            <person name="Larimer F."/>
            <person name="Land M."/>
            <person name="Hauser L."/>
            <person name="Kyrpides N."/>
            <person name="Mikhailova N."/>
            <person name="Hazen T.C."/>
            <person name="Richardson P."/>
        </authorList>
    </citation>
    <scope>NUCLEOTIDE SEQUENCE [LARGE SCALE GENOMIC DNA]</scope>
    <source>
        <strain>DSM 19637 / Miyazaki F</strain>
    </source>
</reference>
<organism>
    <name type="scientific">Nitratidesulfovibrio vulgaris (strain DSM 19637 / Miyazaki F)</name>
    <name type="common">Desulfovibrio vulgaris</name>
    <dbReference type="NCBI Taxonomy" id="883"/>
    <lineage>
        <taxon>Bacteria</taxon>
        <taxon>Pseudomonadati</taxon>
        <taxon>Thermodesulfobacteriota</taxon>
        <taxon>Desulfovibrionia</taxon>
        <taxon>Desulfovibrionales</taxon>
        <taxon>Desulfovibrionaceae</taxon>
        <taxon>Nitratidesulfovibrio</taxon>
    </lineage>
</organism>
<keyword id="KW-0547">Nucleotide-binding</keyword>
<accession>B8DJB8</accession>
<comment type="function">
    <text evidence="1">Nucleotide-binding protein.</text>
</comment>
<comment type="similarity">
    <text evidence="1">Belongs to the YajQ family.</text>
</comment>
<proteinExistence type="inferred from homology"/>
<evidence type="ECO:0000255" key="1">
    <source>
        <dbReference type="HAMAP-Rule" id="MF_00632"/>
    </source>
</evidence>
<name>Y3058_NITV9</name>
<gene>
    <name type="ordered locus">DvMF_3058</name>
</gene>